<organism>
    <name type="scientific">Oryza sativa subsp. japonica</name>
    <name type="common">Rice</name>
    <dbReference type="NCBI Taxonomy" id="39947"/>
    <lineage>
        <taxon>Eukaryota</taxon>
        <taxon>Viridiplantae</taxon>
        <taxon>Streptophyta</taxon>
        <taxon>Embryophyta</taxon>
        <taxon>Tracheophyta</taxon>
        <taxon>Spermatophyta</taxon>
        <taxon>Magnoliopsida</taxon>
        <taxon>Liliopsida</taxon>
        <taxon>Poales</taxon>
        <taxon>Poaceae</taxon>
        <taxon>BOP clade</taxon>
        <taxon>Oryzoideae</taxon>
        <taxon>Oryzeae</taxon>
        <taxon>Oryzinae</taxon>
        <taxon>Oryza</taxon>
        <taxon>Oryza sativa</taxon>
    </lineage>
</organism>
<sequence length="589" mass="64808">MASKAMPRAPPAAPNLQSLKLCSQNDSSLETTSPSKRSALVPGRSAESSKPNPEVVQKEQKSTQHQNESIDLTGSNDPAEVKAEGNLVPKRLADEEKGVVEDGIANGSLKSSSALGKEHGIASASGSARLVGRSETGERGFSSSRCRPSTSSDVSDESACSSISSVTKPHKANDSRWEAIQMIRTRDGILGLSHFKLLKKLGCGDIGSVYLSELSGTKSYFAMKVMDKASLASRKKLLRAQTEKEILQCLDHPFLPTLYTHFETDKFSCLVMEFCPGGDLHTLRQRQRGKYFPEQAVKFYVAEILLAMEYLHMLGIIYRDLKPENVLVREDGHIMLSDFDLSLRCAVSPTLIRSSNPDAEALRKNNQAYCVQPACVEPSCMIQPSCATPTTCFGPRFFSKSKKDRKPKPEVVNQVSPWPELIAEPSDARSMSFVGTHEYLAPEIIKGEGHGSAVDWWTFGIFLYELLFGKTPFKGSGNRATLFNVIGQPLRFPEYPVVSFSARDLIRGLLVKEPQQRLGCKRGATEIKQHPFFEGVNWALIRCASPPEVPRPVEIERPPKQPVSTSEPAAAPSDAAQKSSDSYLEFDFF</sequence>
<protein>
    <recommendedName>
        <fullName>Protein kinase G11A</fullName>
        <ecNumber>2.7.11.1</ecNumber>
    </recommendedName>
</protein>
<evidence type="ECO:0000255" key="1">
    <source>
        <dbReference type="PROSITE-ProRule" id="PRU00159"/>
    </source>
</evidence>
<evidence type="ECO:0000255" key="2">
    <source>
        <dbReference type="PROSITE-ProRule" id="PRU10027"/>
    </source>
</evidence>
<evidence type="ECO:0000256" key="3">
    <source>
        <dbReference type="SAM" id="MobiDB-lite"/>
    </source>
</evidence>
<reference key="1">
    <citation type="journal article" date="2005" name="Nature">
        <title>The map-based sequence of the rice genome.</title>
        <authorList>
            <consortium name="International rice genome sequencing project (IRGSP)"/>
        </authorList>
    </citation>
    <scope>NUCLEOTIDE SEQUENCE [LARGE SCALE GENOMIC DNA]</scope>
    <source>
        <strain>cv. Nipponbare</strain>
    </source>
</reference>
<reference key="2">
    <citation type="journal article" date="2008" name="Nucleic Acids Res.">
        <title>The rice annotation project database (RAP-DB): 2008 update.</title>
        <authorList>
            <consortium name="The rice annotation project (RAP)"/>
        </authorList>
    </citation>
    <scope>GENOME REANNOTATION</scope>
    <source>
        <strain>cv. Nipponbare</strain>
    </source>
</reference>
<reference key="3">
    <citation type="journal article" date="2013" name="Rice">
        <title>Improvement of the Oryza sativa Nipponbare reference genome using next generation sequence and optical map data.</title>
        <authorList>
            <person name="Kawahara Y."/>
            <person name="de la Bastide M."/>
            <person name="Hamilton J.P."/>
            <person name="Kanamori H."/>
            <person name="McCombie W.R."/>
            <person name="Ouyang S."/>
            <person name="Schwartz D.C."/>
            <person name="Tanaka T."/>
            <person name="Wu J."/>
            <person name="Zhou S."/>
            <person name="Childs K.L."/>
            <person name="Davidson R.M."/>
            <person name="Lin H."/>
            <person name="Quesada-Ocampo L."/>
            <person name="Vaillancourt B."/>
            <person name="Sakai H."/>
            <person name="Lee S.S."/>
            <person name="Kim J."/>
            <person name="Numa H."/>
            <person name="Itoh T."/>
            <person name="Buell C.R."/>
            <person name="Matsumoto T."/>
        </authorList>
    </citation>
    <scope>GENOME REANNOTATION</scope>
    <source>
        <strain>cv. Nipponbare</strain>
    </source>
</reference>
<reference key="4">
    <citation type="journal article" date="2005" name="PLoS Biol.">
        <title>The genomes of Oryza sativa: a history of duplications.</title>
        <authorList>
            <person name="Yu J."/>
            <person name="Wang J."/>
            <person name="Lin W."/>
            <person name="Li S."/>
            <person name="Li H."/>
            <person name="Zhou J."/>
            <person name="Ni P."/>
            <person name="Dong W."/>
            <person name="Hu S."/>
            <person name="Zeng C."/>
            <person name="Zhang J."/>
            <person name="Zhang Y."/>
            <person name="Li R."/>
            <person name="Xu Z."/>
            <person name="Li S."/>
            <person name="Li X."/>
            <person name="Zheng H."/>
            <person name="Cong L."/>
            <person name="Lin L."/>
            <person name="Yin J."/>
            <person name="Geng J."/>
            <person name="Li G."/>
            <person name="Shi J."/>
            <person name="Liu J."/>
            <person name="Lv H."/>
            <person name="Li J."/>
            <person name="Wang J."/>
            <person name="Deng Y."/>
            <person name="Ran L."/>
            <person name="Shi X."/>
            <person name="Wang X."/>
            <person name="Wu Q."/>
            <person name="Li C."/>
            <person name="Ren X."/>
            <person name="Wang J."/>
            <person name="Wang X."/>
            <person name="Li D."/>
            <person name="Liu D."/>
            <person name="Zhang X."/>
            <person name="Ji Z."/>
            <person name="Zhao W."/>
            <person name="Sun Y."/>
            <person name="Zhang Z."/>
            <person name="Bao J."/>
            <person name="Han Y."/>
            <person name="Dong L."/>
            <person name="Ji J."/>
            <person name="Chen P."/>
            <person name="Wu S."/>
            <person name="Liu J."/>
            <person name="Xiao Y."/>
            <person name="Bu D."/>
            <person name="Tan J."/>
            <person name="Yang L."/>
            <person name="Ye C."/>
            <person name="Zhang J."/>
            <person name="Xu J."/>
            <person name="Zhou Y."/>
            <person name="Yu Y."/>
            <person name="Zhang B."/>
            <person name="Zhuang S."/>
            <person name="Wei H."/>
            <person name="Liu B."/>
            <person name="Lei M."/>
            <person name="Yu H."/>
            <person name="Li Y."/>
            <person name="Xu H."/>
            <person name="Wei S."/>
            <person name="He X."/>
            <person name="Fang L."/>
            <person name="Zhang Z."/>
            <person name="Zhang Y."/>
            <person name="Huang X."/>
            <person name="Su Z."/>
            <person name="Tong W."/>
            <person name="Li J."/>
            <person name="Tong Z."/>
            <person name="Li S."/>
            <person name="Ye J."/>
            <person name="Wang L."/>
            <person name="Fang L."/>
            <person name="Lei T."/>
            <person name="Chen C.-S."/>
            <person name="Chen H.-C."/>
            <person name="Xu Z."/>
            <person name="Li H."/>
            <person name="Huang H."/>
            <person name="Zhang F."/>
            <person name="Xu H."/>
            <person name="Li N."/>
            <person name="Zhao C."/>
            <person name="Li S."/>
            <person name="Dong L."/>
            <person name="Huang Y."/>
            <person name="Li L."/>
            <person name="Xi Y."/>
            <person name="Qi Q."/>
            <person name="Li W."/>
            <person name="Zhang B."/>
            <person name="Hu W."/>
            <person name="Zhang Y."/>
            <person name="Tian X."/>
            <person name="Jiao Y."/>
            <person name="Liang X."/>
            <person name="Jin J."/>
            <person name="Gao L."/>
            <person name="Zheng W."/>
            <person name="Hao B."/>
            <person name="Liu S.-M."/>
            <person name="Wang W."/>
            <person name="Yuan L."/>
            <person name="Cao M."/>
            <person name="McDermott J."/>
            <person name="Samudrala R."/>
            <person name="Wang J."/>
            <person name="Wong G.K.-S."/>
            <person name="Yang H."/>
        </authorList>
    </citation>
    <scope>NUCLEOTIDE SEQUENCE [LARGE SCALE GENOMIC DNA]</scope>
    <source>
        <strain>cv. Nipponbare</strain>
    </source>
</reference>
<reference key="5">
    <citation type="journal article" date="2003" name="Science">
        <title>Collection, mapping, and annotation of over 28,000 cDNA clones from japonica rice.</title>
        <authorList>
            <consortium name="The rice full-length cDNA consortium"/>
        </authorList>
    </citation>
    <scope>NUCLEOTIDE SEQUENCE [LARGE SCALE MRNA]</scope>
    <source>
        <strain>cv. Nipponbare</strain>
    </source>
</reference>
<proteinExistence type="evidence at transcript level"/>
<accession>Q0DCT8</accession>
<accession>B7EQ74</accession>
<accession>P47997</accession>
<accession>Q5Z583</accession>
<dbReference type="EC" id="2.7.11.1"/>
<dbReference type="EMBL" id="AP005761">
    <property type="protein sequence ID" value="BAD54643.1"/>
    <property type="molecule type" value="Genomic_DNA"/>
</dbReference>
<dbReference type="EMBL" id="AP006860">
    <property type="protein sequence ID" value="BAD69398.1"/>
    <property type="molecule type" value="Genomic_DNA"/>
</dbReference>
<dbReference type="EMBL" id="AP008212">
    <property type="protein sequence ID" value="BAF19335.1"/>
    <property type="molecule type" value="Genomic_DNA"/>
</dbReference>
<dbReference type="EMBL" id="AP014962">
    <property type="protein sequence ID" value="BAS97308.1"/>
    <property type="molecule type" value="Genomic_DNA"/>
</dbReference>
<dbReference type="EMBL" id="CM000143">
    <property type="status" value="NOT_ANNOTATED_CDS"/>
    <property type="molecule type" value="Genomic_DNA"/>
</dbReference>
<dbReference type="EMBL" id="AK100261">
    <property type="protein sequence ID" value="BAG94521.1"/>
    <property type="molecule type" value="mRNA"/>
</dbReference>
<dbReference type="RefSeq" id="XP_015644461.1">
    <property type="nucleotide sequence ID" value="XM_015788975.1"/>
</dbReference>
<dbReference type="RefSeq" id="XP_015644462.1">
    <property type="nucleotide sequence ID" value="XM_015788976.1"/>
</dbReference>
<dbReference type="SMR" id="Q0DCT8"/>
<dbReference type="FunCoup" id="Q0DCT8">
    <property type="interactions" value="41"/>
</dbReference>
<dbReference type="PaxDb" id="39947-Q0DCT8"/>
<dbReference type="EnsemblPlants" id="Os06t0291600-01">
    <property type="protein sequence ID" value="Os06t0291600-01"/>
    <property type="gene ID" value="Os06g0291600"/>
</dbReference>
<dbReference type="GeneID" id="4340792"/>
<dbReference type="Gramene" id="Os06t0291600-01">
    <property type="protein sequence ID" value="Os06t0291600-01"/>
    <property type="gene ID" value="Os06g0291600"/>
</dbReference>
<dbReference type="KEGG" id="dosa:Os06g0291600"/>
<dbReference type="KEGG" id="osa:4340792"/>
<dbReference type="eggNOG" id="KOG0610">
    <property type="taxonomic scope" value="Eukaryota"/>
</dbReference>
<dbReference type="HOGENOM" id="CLU_000288_63_30_1"/>
<dbReference type="InParanoid" id="Q0DCT8"/>
<dbReference type="OMA" id="KNNQAYC"/>
<dbReference type="OrthoDB" id="432483at2759"/>
<dbReference type="Proteomes" id="UP000000763">
    <property type="component" value="Chromosome 6"/>
</dbReference>
<dbReference type="Proteomes" id="UP000007752">
    <property type="component" value="Chromosome 6"/>
</dbReference>
<dbReference type="Proteomes" id="UP000059680">
    <property type="component" value="Chromosome 6"/>
</dbReference>
<dbReference type="GO" id="GO:0005737">
    <property type="term" value="C:cytoplasm"/>
    <property type="evidence" value="ECO:0000318"/>
    <property type="project" value="GO_Central"/>
</dbReference>
<dbReference type="GO" id="GO:0005634">
    <property type="term" value="C:nucleus"/>
    <property type="evidence" value="ECO:0000318"/>
    <property type="project" value="GO_Central"/>
</dbReference>
<dbReference type="GO" id="GO:0005886">
    <property type="term" value="C:plasma membrane"/>
    <property type="evidence" value="ECO:0000318"/>
    <property type="project" value="GO_Central"/>
</dbReference>
<dbReference type="GO" id="GO:0005524">
    <property type="term" value="F:ATP binding"/>
    <property type="evidence" value="ECO:0007669"/>
    <property type="project" value="UniProtKB-KW"/>
</dbReference>
<dbReference type="GO" id="GO:0106310">
    <property type="term" value="F:protein serine kinase activity"/>
    <property type="evidence" value="ECO:0007669"/>
    <property type="project" value="RHEA"/>
</dbReference>
<dbReference type="GO" id="GO:0004674">
    <property type="term" value="F:protein serine/threonine kinase activity"/>
    <property type="evidence" value="ECO:0000318"/>
    <property type="project" value="GO_Central"/>
</dbReference>
<dbReference type="CDD" id="cd05574">
    <property type="entry name" value="STKc_phototropin_like"/>
    <property type="match status" value="1"/>
</dbReference>
<dbReference type="FunFam" id="3.30.200.20:FF:000032">
    <property type="entry name" value="Serine/threonine-protein kinase D6PK-like"/>
    <property type="match status" value="1"/>
</dbReference>
<dbReference type="FunFam" id="1.10.510.10:FF:000020">
    <property type="entry name" value="serine/threonine-protein kinase D6PK-like"/>
    <property type="match status" value="1"/>
</dbReference>
<dbReference type="FunFam" id="1.10.510.10:FF:000028">
    <property type="entry name" value="serine/threonine-protein kinase D6PK-like"/>
    <property type="match status" value="1"/>
</dbReference>
<dbReference type="Gene3D" id="3.30.200.20">
    <property type="entry name" value="Phosphorylase Kinase, domain 1"/>
    <property type="match status" value="1"/>
</dbReference>
<dbReference type="Gene3D" id="1.10.510.10">
    <property type="entry name" value="Transferase(Phosphotransferase) domain 1"/>
    <property type="match status" value="2"/>
</dbReference>
<dbReference type="InterPro" id="IPR011009">
    <property type="entry name" value="Kinase-like_dom_sf"/>
</dbReference>
<dbReference type="InterPro" id="IPR000719">
    <property type="entry name" value="Prot_kinase_dom"/>
</dbReference>
<dbReference type="InterPro" id="IPR008271">
    <property type="entry name" value="Ser/Thr_kinase_AS"/>
</dbReference>
<dbReference type="PANTHER" id="PTHR45637">
    <property type="entry name" value="FLIPPASE KINASE 1-RELATED"/>
    <property type="match status" value="1"/>
</dbReference>
<dbReference type="Pfam" id="PF00069">
    <property type="entry name" value="Pkinase"/>
    <property type="match status" value="2"/>
</dbReference>
<dbReference type="SMART" id="SM00220">
    <property type="entry name" value="S_TKc"/>
    <property type="match status" value="1"/>
</dbReference>
<dbReference type="SUPFAM" id="SSF56112">
    <property type="entry name" value="Protein kinase-like (PK-like)"/>
    <property type="match status" value="1"/>
</dbReference>
<dbReference type="PROSITE" id="PS50011">
    <property type="entry name" value="PROTEIN_KINASE_DOM"/>
    <property type="match status" value="1"/>
</dbReference>
<dbReference type="PROSITE" id="PS00108">
    <property type="entry name" value="PROTEIN_KINASE_ST"/>
    <property type="match status" value="1"/>
</dbReference>
<keyword id="KW-0067">ATP-binding</keyword>
<keyword id="KW-0418">Kinase</keyword>
<keyword id="KW-0547">Nucleotide-binding</keyword>
<keyword id="KW-1185">Reference proteome</keyword>
<keyword id="KW-0723">Serine/threonine-protein kinase</keyword>
<keyword id="KW-0808">Transferase</keyword>
<gene>
    <name type="ordered locus">Os06g0291600</name>
    <name type="ordered locus">LOC_Os06g18830</name>
    <name type="ORF">B1026E06.38</name>
    <name type="ORF">B1066D09.24</name>
    <name type="ORF">OsJ_020170</name>
</gene>
<comment type="function">
    <text>May play a role in the regulation of metabolism and signal transduction processes.</text>
</comment>
<comment type="catalytic activity">
    <reaction>
        <text>L-seryl-[protein] + ATP = O-phospho-L-seryl-[protein] + ADP + H(+)</text>
        <dbReference type="Rhea" id="RHEA:17989"/>
        <dbReference type="Rhea" id="RHEA-COMP:9863"/>
        <dbReference type="Rhea" id="RHEA-COMP:11604"/>
        <dbReference type="ChEBI" id="CHEBI:15378"/>
        <dbReference type="ChEBI" id="CHEBI:29999"/>
        <dbReference type="ChEBI" id="CHEBI:30616"/>
        <dbReference type="ChEBI" id="CHEBI:83421"/>
        <dbReference type="ChEBI" id="CHEBI:456216"/>
        <dbReference type="EC" id="2.7.11.1"/>
    </reaction>
</comment>
<comment type="catalytic activity">
    <reaction>
        <text>L-threonyl-[protein] + ATP = O-phospho-L-threonyl-[protein] + ADP + H(+)</text>
        <dbReference type="Rhea" id="RHEA:46608"/>
        <dbReference type="Rhea" id="RHEA-COMP:11060"/>
        <dbReference type="Rhea" id="RHEA-COMP:11605"/>
        <dbReference type="ChEBI" id="CHEBI:15378"/>
        <dbReference type="ChEBI" id="CHEBI:30013"/>
        <dbReference type="ChEBI" id="CHEBI:30616"/>
        <dbReference type="ChEBI" id="CHEBI:61977"/>
        <dbReference type="ChEBI" id="CHEBI:456216"/>
        <dbReference type="EC" id="2.7.11.1"/>
    </reaction>
</comment>
<comment type="similarity">
    <text evidence="1">Belongs to the protein kinase superfamily. Ser/Thr protein kinase family.</text>
</comment>
<name>G11A_ORYSJ</name>
<feature type="chain" id="PRO_0000085956" description="Protein kinase G11A">
    <location>
        <begin position="1"/>
        <end position="589"/>
    </location>
</feature>
<feature type="domain" description="Protein kinase" evidence="1">
    <location>
        <begin position="195"/>
        <end position="533"/>
    </location>
</feature>
<feature type="region of interest" description="Disordered" evidence="3">
    <location>
        <begin position="1"/>
        <end position="167"/>
    </location>
</feature>
<feature type="region of interest" description="Disordered" evidence="3">
    <location>
        <begin position="551"/>
        <end position="589"/>
    </location>
</feature>
<feature type="compositionally biased region" description="Polar residues" evidence="3">
    <location>
        <begin position="15"/>
        <end position="36"/>
    </location>
</feature>
<feature type="compositionally biased region" description="Polar residues" evidence="3">
    <location>
        <begin position="63"/>
        <end position="76"/>
    </location>
</feature>
<feature type="compositionally biased region" description="Basic and acidic residues" evidence="3">
    <location>
        <begin position="91"/>
        <end position="100"/>
    </location>
</feature>
<feature type="compositionally biased region" description="Low complexity" evidence="3">
    <location>
        <begin position="142"/>
        <end position="165"/>
    </location>
</feature>
<feature type="active site" description="Proton acceptor" evidence="1 2">
    <location>
        <position position="320"/>
    </location>
</feature>
<feature type="binding site" evidence="1">
    <location>
        <begin position="201"/>
        <end position="209"/>
    </location>
    <ligand>
        <name>ATP</name>
        <dbReference type="ChEBI" id="CHEBI:30616"/>
    </ligand>
</feature>
<feature type="binding site" evidence="1">
    <location>
        <position position="224"/>
    </location>
    <ligand>
        <name>ATP</name>
        <dbReference type="ChEBI" id="CHEBI:30616"/>
    </ligand>
</feature>